<name>RECO_JANSC</name>
<proteinExistence type="inferred from homology"/>
<sequence length="244" mass="25864">MDWRADGILLAVRRHGEASAIIELFTADQGCHLGVVRGGASRKMAPLLQVGAQLDATWRARLSDHIGSYTVELVKGRAAEVMEDRVALAGLSSVCALLSFSLPERAAYPGLFARTLAVLDGLGAERWAEAYLGWEMALLTEMGFGLDLSQCAATGVTQDLAFISPRTGRAVSRAAAGEWADRLLPLSPALEGMARGPEDILAGLAVTGHFLATHLAPSLGDKPLPAARQRLIDALERQVIRGGS</sequence>
<gene>
    <name evidence="1" type="primary">recO</name>
    <name type="ordered locus">Jann_0527</name>
</gene>
<keyword id="KW-0227">DNA damage</keyword>
<keyword id="KW-0233">DNA recombination</keyword>
<keyword id="KW-0234">DNA repair</keyword>
<keyword id="KW-1185">Reference proteome</keyword>
<protein>
    <recommendedName>
        <fullName evidence="1">DNA repair protein RecO</fullName>
    </recommendedName>
    <alternativeName>
        <fullName evidence="1">Recombination protein O</fullName>
    </alternativeName>
</protein>
<feature type="chain" id="PRO_0000264819" description="DNA repair protein RecO">
    <location>
        <begin position="1"/>
        <end position="244"/>
    </location>
</feature>
<comment type="function">
    <text evidence="1">Involved in DNA repair and RecF pathway recombination.</text>
</comment>
<comment type="similarity">
    <text evidence="1">Belongs to the RecO family.</text>
</comment>
<dbReference type="EMBL" id="CP000264">
    <property type="protein sequence ID" value="ABD53444.1"/>
    <property type="molecule type" value="Genomic_DNA"/>
</dbReference>
<dbReference type="RefSeq" id="WP_011453653.1">
    <property type="nucleotide sequence ID" value="NC_007802.1"/>
</dbReference>
<dbReference type="SMR" id="Q28V18"/>
<dbReference type="STRING" id="290400.Jann_0527"/>
<dbReference type="KEGG" id="jan:Jann_0527"/>
<dbReference type="eggNOG" id="COG1381">
    <property type="taxonomic scope" value="Bacteria"/>
</dbReference>
<dbReference type="HOGENOM" id="CLU_086029_0_0_5"/>
<dbReference type="OrthoDB" id="9804792at2"/>
<dbReference type="Proteomes" id="UP000008326">
    <property type="component" value="Chromosome"/>
</dbReference>
<dbReference type="GO" id="GO:0043590">
    <property type="term" value="C:bacterial nucleoid"/>
    <property type="evidence" value="ECO:0007669"/>
    <property type="project" value="TreeGrafter"/>
</dbReference>
<dbReference type="GO" id="GO:0006310">
    <property type="term" value="P:DNA recombination"/>
    <property type="evidence" value="ECO:0007669"/>
    <property type="project" value="UniProtKB-UniRule"/>
</dbReference>
<dbReference type="GO" id="GO:0006302">
    <property type="term" value="P:double-strand break repair"/>
    <property type="evidence" value="ECO:0007669"/>
    <property type="project" value="TreeGrafter"/>
</dbReference>
<dbReference type="Gene3D" id="2.40.50.140">
    <property type="entry name" value="Nucleic acid-binding proteins"/>
    <property type="match status" value="1"/>
</dbReference>
<dbReference type="Gene3D" id="1.20.1440.120">
    <property type="entry name" value="Recombination protein O, C-terminal domain"/>
    <property type="match status" value="1"/>
</dbReference>
<dbReference type="HAMAP" id="MF_00201">
    <property type="entry name" value="RecO"/>
    <property type="match status" value="1"/>
</dbReference>
<dbReference type="InterPro" id="IPR037278">
    <property type="entry name" value="ARFGAP/RecO"/>
</dbReference>
<dbReference type="InterPro" id="IPR022572">
    <property type="entry name" value="DNA_rep/recomb_RecO_N"/>
</dbReference>
<dbReference type="InterPro" id="IPR012340">
    <property type="entry name" value="NA-bd_OB-fold"/>
</dbReference>
<dbReference type="InterPro" id="IPR003717">
    <property type="entry name" value="RecO"/>
</dbReference>
<dbReference type="InterPro" id="IPR042242">
    <property type="entry name" value="RecO_C"/>
</dbReference>
<dbReference type="NCBIfam" id="TIGR00613">
    <property type="entry name" value="reco"/>
    <property type="match status" value="1"/>
</dbReference>
<dbReference type="PANTHER" id="PTHR33991">
    <property type="entry name" value="DNA REPAIR PROTEIN RECO"/>
    <property type="match status" value="1"/>
</dbReference>
<dbReference type="PANTHER" id="PTHR33991:SF1">
    <property type="entry name" value="DNA REPAIR PROTEIN RECO"/>
    <property type="match status" value="1"/>
</dbReference>
<dbReference type="Pfam" id="PF02565">
    <property type="entry name" value="RecO_C"/>
    <property type="match status" value="1"/>
</dbReference>
<dbReference type="Pfam" id="PF11967">
    <property type="entry name" value="RecO_N"/>
    <property type="match status" value="1"/>
</dbReference>
<dbReference type="SUPFAM" id="SSF57863">
    <property type="entry name" value="ArfGap/RecO-like zinc finger"/>
    <property type="match status" value="1"/>
</dbReference>
<dbReference type="SUPFAM" id="SSF50249">
    <property type="entry name" value="Nucleic acid-binding proteins"/>
    <property type="match status" value="1"/>
</dbReference>
<reference key="1">
    <citation type="submission" date="2006-02" db="EMBL/GenBank/DDBJ databases">
        <title>Complete sequence of chromosome of Jannaschia sp. CCS1.</title>
        <authorList>
            <consortium name="US DOE Joint Genome Institute"/>
            <person name="Copeland A."/>
            <person name="Lucas S."/>
            <person name="Lapidus A."/>
            <person name="Barry K."/>
            <person name="Detter J.C."/>
            <person name="Glavina del Rio T."/>
            <person name="Hammon N."/>
            <person name="Israni S."/>
            <person name="Pitluck S."/>
            <person name="Brettin T."/>
            <person name="Bruce D."/>
            <person name="Han C."/>
            <person name="Tapia R."/>
            <person name="Gilna P."/>
            <person name="Chertkov O."/>
            <person name="Saunders E."/>
            <person name="Schmutz J."/>
            <person name="Larimer F."/>
            <person name="Land M."/>
            <person name="Kyrpides N."/>
            <person name="Lykidis A."/>
            <person name="Moran M.A."/>
            <person name="Belas R."/>
            <person name="Ye W."/>
            <person name="Buchan A."/>
            <person name="Gonzalez J.M."/>
            <person name="Schell M.A."/>
            <person name="Richardson P."/>
        </authorList>
    </citation>
    <scope>NUCLEOTIDE SEQUENCE [LARGE SCALE GENOMIC DNA]</scope>
    <source>
        <strain>CCS1</strain>
    </source>
</reference>
<organism>
    <name type="scientific">Jannaschia sp. (strain CCS1)</name>
    <dbReference type="NCBI Taxonomy" id="290400"/>
    <lineage>
        <taxon>Bacteria</taxon>
        <taxon>Pseudomonadati</taxon>
        <taxon>Pseudomonadota</taxon>
        <taxon>Alphaproteobacteria</taxon>
        <taxon>Rhodobacterales</taxon>
        <taxon>Roseobacteraceae</taxon>
        <taxon>Jannaschia</taxon>
    </lineage>
</organism>
<evidence type="ECO:0000255" key="1">
    <source>
        <dbReference type="HAMAP-Rule" id="MF_00201"/>
    </source>
</evidence>
<accession>Q28V18</accession>